<organism>
    <name type="scientific">Escherichia coli (strain UTI89 / UPEC)</name>
    <dbReference type="NCBI Taxonomy" id="364106"/>
    <lineage>
        <taxon>Bacteria</taxon>
        <taxon>Pseudomonadati</taxon>
        <taxon>Pseudomonadota</taxon>
        <taxon>Gammaproteobacteria</taxon>
        <taxon>Enterobacterales</taxon>
        <taxon>Enterobacteriaceae</taxon>
        <taxon>Escherichia</taxon>
    </lineage>
</organism>
<protein>
    <recommendedName>
        <fullName evidence="1">Ribosome-recycling factor</fullName>
        <shortName evidence="1">RRF</shortName>
    </recommendedName>
    <alternativeName>
        <fullName evidence="1">Ribosome-releasing factor</fullName>
    </alternativeName>
</protein>
<proteinExistence type="inferred from homology"/>
<gene>
    <name evidence="1" type="primary">frr</name>
    <name type="ordered locus">UTI89_C0187</name>
</gene>
<sequence>MISDIRKDAEVRMDKCVEAFKTQISKIRTGRASPSLLDGIVVEYYGTPTPLRQLASVTVEDSRTLKINVFDRSMSPAVEKAIMASDLGLNPNSAGSDIRVPLPPLTEERRKDLTKIVRGEAEQARVAVRNVRRDANDKVKALLKDKEISEDDDRRSQDDVQKLTDAAIKKIEAALADKEAELMQF</sequence>
<name>RRF_ECOUT</name>
<reference key="1">
    <citation type="journal article" date="2006" name="Proc. Natl. Acad. Sci. U.S.A.">
        <title>Identification of genes subject to positive selection in uropathogenic strains of Escherichia coli: a comparative genomics approach.</title>
        <authorList>
            <person name="Chen S.L."/>
            <person name="Hung C.-S."/>
            <person name="Xu J."/>
            <person name="Reigstad C.S."/>
            <person name="Magrini V."/>
            <person name="Sabo A."/>
            <person name="Blasiar D."/>
            <person name="Bieri T."/>
            <person name="Meyer R.R."/>
            <person name="Ozersky P."/>
            <person name="Armstrong J.R."/>
            <person name="Fulton R.S."/>
            <person name="Latreille J.P."/>
            <person name="Spieth J."/>
            <person name="Hooton T.M."/>
            <person name="Mardis E.R."/>
            <person name="Hultgren S.J."/>
            <person name="Gordon J.I."/>
        </authorList>
    </citation>
    <scope>NUCLEOTIDE SEQUENCE [LARGE SCALE GENOMIC DNA]</scope>
    <source>
        <strain>UTI89 / UPEC</strain>
    </source>
</reference>
<keyword id="KW-0007">Acetylation</keyword>
<keyword id="KW-0963">Cytoplasm</keyword>
<keyword id="KW-0648">Protein biosynthesis</keyword>
<accession>Q1RG17</accession>
<dbReference type="EMBL" id="CP000243">
    <property type="protein sequence ID" value="ABE05697.1"/>
    <property type="molecule type" value="Genomic_DNA"/>
</dbReference>
<dbReference type="RefSeq" id="WP_000622418.1">
    <property type="nucleotide sequence ID" value="NZ_CP064825.1"/>
</dbReference>
<dbReference type="SMR" id="Q1RG17"/>
<dbReference type="GeneID" id="93777253"/>
<dbReference type="KEGG" id="eci:UTI89_C0187"/>
<dbReference type="HOGENOM" id="CLU_073981_2_1_6"/>
<dbReference type="Proteomes" id="UP000001952">
    <property type="component" value="Chromosome"/>
</dbReference>
<dbReference type="GO" id="GO:0005829">
    <property type="term" value="C:cytosol"/>
    <property type="evidence" value="ECO:0007669"/>
    <property type="project" value="GOC"/>
</dbReference>
<dbReference type="GO" id="GO:0043023">
    <property type="term" value="F:ribosomal large subunit binding"/>
    <property type="evidence" value="ECO:0007669"/>
    <property type="project" value="TreeGrafter"/>
</dbReference>
<dbReference type="GO" id="GO:0002184">
    <property type="term" value="P:cytoplasmic translational termination"/>
    <property type="evidence" value="ECO:0007669"/>
    <property type="project" value="TreeGrafter"/>
</dbReference>
<dbReference type="CDD" id="cd00520">
    <property type="entry name" value="RRF"/>
    <property type="match status" value="1"/>
</dbReference>
<dbReference type="FunFam" id="1.10.132.20:FF:000001">
    <property type="entry name" value="Ribosome-recycling factor"/>
    <property type="match status" value="1"/>
</dbReference>
<dbReference type="FunFam" id="3.30.1360.40:FF:000001">
    <property type="entry name" value="Ribosome-recycling factor"/>
    <property type="match status" value="1"/>
</dbReference>
<dbReference type="Gene3D" id="3.30.1360.40">
    <property type="match status" value="1"/>
</dbReference>
<dbReference type="Gene3D" id="1.10.132.20">
    <property type="entry name" value="Ribosome-recycling factor"/>
    <property type="match status" value="1"/>
</dbReference>
<dbReference type="HAMAP" id="MF_00040">
    <property type="entry name" value="RRF"/>
    <property type="match status" value="1"/>
</dbReference>
<dbReference type="InterPro" id="IPR002661">
    <property type="entry name" value="Ribosome_recyc_fac"/>
</dbReference>
<dbReference type="InterPro" id="IPR023584">
    <property type="entry name" value="Ribosome_recyc_fac_dom"/>
</dbReference>
<dbReference type="InterPro" id="IPR036191">
    <property type="entry name" value="RRF_sf"/>
</dbReference>
<dbReference type="NCBIfam" id="TIGR00496">
    <property type="entry name" value="frr"/>
    <property type="match status" value="1"/>
</dbReference>
<dbReference type="PANTHER" id="PTHR20982:SF3">
    <property type="entry name" value="MITOCHONDRIAL RIBOSOME RECYCLING FACTOR PSEUDO 1"/>
    <property type="match status" value="1"/>
</dbReference>
<dbReference type="PANTHER" id="PTHR20982">
    <property type="entry name" value="RIBOSOME RECYCLING FACTOR"/>
    <property type="match status" value="1"/>
</dbReference>
<dbReference type="Pfam" id="PF01765">
    <property type="entry name" value="RRF"/>
    <property type="match status" value="1"/>
</dbReference>
<dbReference type="SUPFAM" id="SSF55194">
    <property type="entry name" value="Ribosome recycling factor, RRF"/>
    <property type="match status" value="1"/>
</dbReference>
<feature type="chain" id="PRO_1000003158" description="Ribosome-recycling factor">
    <location>
        <begin position="1"/>
        <end position="185"/>
    </location>
</feature>
<feature type="modified residue" description="N6-acetyllysine" evidence="1">
    <location>
        <position position="162"/>
    </location>
</feature>
<comment type="function">
    <text evidence="1">Responsible for the release of ribosomes from messenger RNA at the termination of protein biosynthesis. May increase the efficiency of translation by recycling ribosomes from one round of translation to another.</text>
</comment>
<comment type="subcellular location">
    <subcellularLocation>
        <location evidence="1">Cytoplasm</location>
    </subcellularLocation>
</comment>
<comment type="similarity">
    <text evidence="1">Belongs to the RRF family.</text>
</comment>
<evidence type="ECO:0000255" key="1">
    <source>
        <dbReference type="HAMAP-Rule" id="MF_00040"/>
    </source>
</evidence>